<organismHost>
    <name type="scientific">Aves</name>
    <dbReference type="NCBI Taxonomy" id="8782"/>
</organismHost>
<organismHost>
    <name type="scientific">Homo sapiens</name>
    <name type="common">Human</name>
    <dbReference type="NCBI Taxonomy" id="9606"/>
</organismHost>
<organism>
    <name type="scientific">Influenza A virus (strain A/Victoria/5/1968 H2N2)</name>
    <dbReference type="NCBI Taxonomy" id="11482"/>
    <lineage>
        <taxon>Viruses</taxon>
        <taxon>Riboviria</taxon>
        <taxon>Orthornavirae</taxon>
        <taxon>Negarnaviricota</taxon>
        <taxon>Polyploviricotina</taxon>
        <taxon>Insthoviricetes</taxon>
        <taxon>Articulavirales</taxon>
        <taxon>Orthomyxoviridae</taxon>
        <taxon>Alphainfluenzavirus</taxon>
        <taxon>Alphainfluenzavirus influenzae</taxon>
        <taxon>Influenza A virus</taxon>
    </lineage>
</organism>
<protein>
    <recommendedName>
        <fullName evidence="1">Nucleoprotein</fullName>
    </recommendedName>
    <alternativeName>
        <fullName evidence="1">Nucleocapsid protein</fullName>
        <shortName evidence="1">Protein N</shortName>
    </alternativeName>
</protein>
<keyword id="KW-0167">Capsid protein</keyword>
<keyword id="KW-1139">Helical capsid protein</keyword>
<keyword id="KW-1048">Host nucleus</keyword>
<keyword id="KW-0945">Host-virus interaction</keyword>
<keyword id="KW-0687">Ribonucleoprotein</keyword>
<keyword id="KW-0694">RNA-binding</keyword>
<keyword id="KW-0543">Viral nucleoprotein</keyword>
<keyword id="KW-1163">Viral penetration into host nucleus</keyword>
<keyword id="KW-0946">Virion</keyword>
<keyword id="KW-1160">Virus entry into host cell</keyword>
<gene>
    <name evidence="1" type="primary">NP</name>
</gene>
<proteinExistence type="inferred from homology"/>
<evidence type="ECO:0000255" key="1">
    <source>
        <dbReference type="HAMAP-Rule" id="MF_04070"/>
    </source>
</evidence>
<evidence type="ECO:0000256" key="2">
    <source>
        <dbReference type="SAM" id="MobiDB-lite"/>
    </source>
</evidence>
<feature type="chain" id="PRO_0000079110" description="Nucleoprotein">
    <location>
        <begin position="1"/>
        <end position="498"/>
    </location>
</feature>
<feature type="region of interest" description="Disordered" evidence="2">
    <location>
        <begin position="1"/>
        <end position="22"/>
    </location>
</feature>
<feature type="short sequence motif" description="Unconventional nuclear localization signal" evidence="1">
    <location>
        <begin position="1"/>
        <end position="18"/>
    </location>
</feature>
<feature type="short sequence motif" description="Bipartite nuclear localization signal" evidence="1">
    <location>
        <begin position="198"/>
        <end position="216"/>
    </location>
</feature>
<feature type="compositionally biased region" description="Basic and acidic residues" evidence="2">
    <location>
        <begin position="8"/>
        <end position="21"/>
    </location>
</feature>
<dbReference type="EMBL" id="M63753">
    <property type="protein sequence ID" value="AAA52252.1"/>
    <property type="molecule type" value="Genomic_RNA"/>
</dbReference>
<dbReference type="SMR" id="P26073"/>
<dbReference type="GO" id="GO:0019029">
    <property type="term" value="C:helical viral capsid"/>
    <property type="evidence" value="ECO:0007669"/>
    <property type="project" value="UniProtKB-UniRule"/>
</dbReference>
<dbReference type="GO" id="GO:0043657">
    <property type="term" value="C:host cell"/>
    <property type="evidence" value="ECO:0007669"/>
    <property type="project" value="GOC"/>
</dbReference>
<dbReference type="GO" id="GO:0042025">
    <property type="term" value="C:host cell nucleus"/>
    <property type="evidence" value="ECO:0007669"/>
    <property type="project" value="UniProtKB-SubCell"/>
</dbReference>
<dbReference type="GO" id="GO:1990904">
    <property type="term" value="C:ribonucleoprotein complex"/>
    <property type="evidence" value="ECO:0007669"/>
    <property type="project" value="UniProtKB-KW"/>
</dbReference>
<dbReference type="GO" id="GO:0019013">
    <property type="term" value="C:viral nucleocapsid"/>
    <property type="evidence" value="ECO:0007669"/>
    <property type="project" value="UniProtKB-UniRule"/>
</dbReference>
<dbReference type="GO" id="GO:0003723">
    <property type="term" value="F:RNA binding"/>
    <property type="evidence" value="ECO:0007669"/>
    <property type="project" value="UniProtKB-UniRule"/>
</dbReference>
<dbReference type="GO" id="GO:0005198">
    <property type="term" value="F:structural molecule activity"/>
    <property type="evidence" value="ECO:0007669"/>
    <property type="project" value="UniProtKB-UniRule"/>
</dbReference>
<dbReference type="GO" id="GO:0046718">
    <property type="term" value="P:symbiont entry into host cell"/>
    <property type="evidence" value="ECO:0007669"/>
    <property type="project" value="UniProtKB-KW"/>
</dbReference>
<dbReference type="GO" id="GO:0075732">
    <property type="term" value="P:viral penetration into host nucleus"/>
    <property type="evidence" value="ECO:0007669"/>
    <property type="project" value="UniProtKB-UniRule"/>
</dbReference>
<dbReference type="HAMAP" id="MF_04070">
    <property type="entry name" value="INFV_NCAP"/>
    <property type="match status" value="1"/>
</dbReference>
<dbReference type="InterPro" id="IPR002141">
    <property type="entry name" value="Flu_NP"/>
</dbReference>
<dbReference type="Pfam" id="PF00506">
    <property type="entry name" value="Flu_NP"/>
    <property type="match status" value="1"/>
</dbReference>
<dbReference type="SUPFAM" id="SSF161003">
    <property type="entry name" value="flu NP-like"/>
    <property type="match status" value="1"/>
</dbReference>
<sequence length="498" mass="56000">MASQGTKRSYEQMETDGERPNATEIRASVGKMIDGIGRFYIQMCTELKLSDYEGRLIQNSLTIERMVLSAFDERRNKYLEEHPSAGKDPKKTGGPIYKRVDGKWMRELVLYDKEEIRRIWRQANNGDDATAGLTHMMIWHSNLNDTTYQRTRALVRTGMDPRMCSLMQGSTLPRRSGAAGAAVKGVGTMVMELIRMIKRGINDRNFWRGENGRKTRSAYERMCNILKGKFQTAAQRAMMDQVRESRNPGNAEIEDLIFLARSALILRGSVAHKSCLPACVYGPAVASGYDFEKEGYSLVGIDPFKLLQNSQVYSLIRPNENPAHKSQLVWMACNSAAFEDLRVLSFIRGTKVSPRGKLSTRGVQIASNENMDTMGSSTLELRSRYWAIRTRSGGNTTQQRASAGQISVQPTFSVQRNLPFDKPTIMAAFTGNTEGRTSDMRAEIIRMMEGAKPEEMSFQGRGVFELSDEKATNPIVPSFDMSNEGSYFFGDNAEEYDN</sequence>
<accession>P26073</accession>
<reference key="1">
    <citation type="journal article" date="1991" name="J. Virol.">
        <title>Evolution of influenza A virus nucleoprotein genes: implications for the origins of H1N1 human and classical swine viruses.</title>
        <authorList>
            <person name="Gorman O.T."/>
            <person name="Bean W.J."/>
            <person name="Kawaoka Y."/>
            <person name="Donatelli I."/>
            <person name="Guo Y."/>
            <person name="Webster R.G."/>
        </authorList>
    </citation>
    <scope>NUCLEOTIDE SEQUENCE [GENOMIC RNA]</scope>
</reference>
<comment type="function">
    <text evidence="1">Encapsidates the negative strand viral RNA, protecting it from nucleases. The encapsidated genomic RNA is termed the ribonucleoprotein (RNP) and serves as template for transcription and replication. The RNP needs to be localized in the host nucleus to start an infectious cycle, but is too large to diffuse through the nuclear pore complex. NP comprises at least 2 nuclear localization signals that are responsible for the active RNP import into the nucleus through cellular importin alpha/beta pathway. Later in the infection, nclear export of RNPs are mediated through viral proteins NEP interacting with M1 which binds nucleoproteins. It is possible that nucleoprotein binds directly host exportin-1/XPO1 and plays an active role in RNPs nuclear export. M1 interaction with RNP seems to hide nucleoprotein's nuclear localization signals. Soon after a virion infects a new cell, M1 dissociates from the RNP under acidification of the virion driven by M2 protein. Dissociation of M1 from RNP unmasks nucleoprotein's nuclear localization signals, targeting the RNP to the nucleus.</text>
</comment>
<comment type="subunit">
    <text evidence="1">Homomultimerizes to form the nucleocapsid. May bind host exportin-1/XPO1. Binds to viral genomic RNA. Protein-RNA contacts are mediated by a combination of electrostatic interactions between positively charged residues and the phosphate backbone and planar interactions between aromatic side chains and bases.</text>
</comment>
<comment type="subcellular location">
    <subcellularLocation>
        <location evidence="1">Virion</location>
    </subcellularLocation>
    <subcellularLocation>
        <location evidence="1">Host nucleus</location>
    </subcellularLocation>
</comment>
<comment type="PTM">
    <text evidence="1">Late in virus-infected cells, may be cleaved from a 56-kDa protein to a 53-kDa protein by a cellular caspase. This cleavage might be a marker for the onset of apoptosis in infected cells or have a specific function in virus host interaction.</text>
</comment>
<comment type="similarity">
    <text evidence="1">Belongs to the influenza viruses nucleoprotein family.</text>
</comment>
<name>NCAP_I68A2</name>